<name>MURC_STAAE</name>
<keyword id="KW-0067">ATP-binding</keyword>
<keyword id="KW-0131">Cell cycle</keyword>
<keyword id="KW-0132">Cell division</keyword>
<keyword id="KW-0133">Cell shape</keyword>
<keyword id="KW-0961">Cell wall biogenesis/degradation</keyword>
<keyword id="KW-0963">Cytoplasm</keyword>
<keyword id="KW-0436">Ligase</keyword>
<keyword id="KW-0547">Nucleotide-binding</keyword>
<keyword id="KW-0573">Peptidoglycan synthesis</keyword>
<dbReference type="EC" id="6.3.2.8" evidence="1"/>
<dbReference type="EMBL" id="AP009351">
    <property type="protein sequence ID" value="BAF67905.1"/>
    <property type="molecule type" value="Genomic_DNA"/>
</dbReference>
<dbReference type="RefSeq" id="WP_000150168.1">
    <property type="nucleotide sequence ID" value="NZ_JBBIAE010000009.1"/>
</dbReference>
<dbReference type="SMR" id="A6QHS3"/>
<dbReference type="KEGG" id="sae:NWMN_1633"/>
<dbReference type="HOGENOM" id="CLU_028104_1_0_9"/>
<dbReference type="UniPathway" id="UPA00219"/>
<dbReference type="Proteomes" id="UP000006386">
    <property type="component" value="Chromosome"/>
</dbReference>
<dbReference type="GO" id="GO:0005737">
    <property type="term" value="C:cytoplasm"/>
    <property type="evidence" value="ECO:0007669"/>
    <property type="project" value="UniProtKB-SubCell"/>
</dbReference>
<dbReference type="GO" id="GO:0005524">
    <property type="term" value="F:ATP binding"/>
    <property type="evidence" value="ECO:0007669"/>
    <property type="project" value="UniProtKB-UniRule"/>
</dbReference>
<dbReference type="GO" id="GO:0008763">
    <property type="term" value="F:UDP-N-acetylmuramate-L-alanine ligase activity"/>
    <property type="evidence" value="ECO:0007669"/>
    <property type="project" value="UniProtKB-UniRule"/>
</dbReference>
<dbReference type="GO" id="GO:0051301">
    <property type="term" value="P:cell division"/>
    <property type="evidence" value="ECO:0007669"/>
    <property type="project" value="UniProtKB-KW"/>
</dbReference>
<dbReference type="GO" id="GO:0071555">
    <property type="term" value="P:cell wall organization"/>
    <property type="evidence" value="ECO:0007669"/>
    <property type="project" value="UniProtKB-KW"/>
</dbReference>
<dbReference type="GO" id="GO:0009252">
    <property type="term" value="P:peptidoglycan biosynthetic process"/>
    <property type="evidence" value="ECO:0007669"/>
    <property type="project" value="UniProtKB-UniRule"/>
</dbReference>
<dbReference type="GO" id="GO:0008360">
    <property type="term" value="P:regulation of cell shape"/>
    <property type="evidence" value="ECO:0007669"/>
    <property type="project" value="UniProtKB-KW"/>
</dbReference>
<dbReference type="Gene3D" id="3.90.190.20">
    <property type="entry name" value="Mur ligase, C-terminal domain"/>
    <property type="match status" value="1"/>
</dbReference>
<dbReference type="Gene3D" id="3.40.1190.10">
    <property type="entry name" value="Mur-like, catalytic domain"/>
    <property type="match status" value="1"/>
</dbReference>
<dbReference type="Gene3D" id="3.40.50.720">
    <property type="entry name" value="NAD(P)-binding Rossmann-like Domain"/>
    <property type="match status" value="1"/>
</dbReference>
<dbReference type="HAMAP" id="MF_00046">
    <property type="entry name" value="MurC"/>
    <property type="match status" value="1"/>
</dbReference>
<dbReference type="InterPro" id="IPR036565">
    <property type="entry name" value="Mur-like_cat_sf"/>
</dbReference>
<dbReference type="InterPro" id="IPR004101">
    <property type="entry name" value="Mur_ligase_C"/>
</dbReference>
<dbReference type="InterPro" id="IPR036615">
    <property type="entry name" value="Mur_ligase_C_dom_sf"/>
</dbReference>
<dbReference type="InterPro" id="IPR013221">
    <property type="entry name" value="Mur_ligase_cen"/>
</dbReference>
<dbReference type="InterPro" id="IPR000713">
    <property type="entry name" value="Mur_ligase_N"/>
</dbReference>
<dbReference type="InterPro" id="IPR050061">
    <property type="entry name" value="MurCDEF_pg_biosynth"/>
</dbReference>
<dbReference type="InterPro" id="IPR005758">
    <property type="entry name" value="UDP-N-AcMur_Ala_ligase_MurC"/>
</dbReference>
<dbReference type="NCBIfam" id="TIGR01082">
    <property type="entry name" value="murC"/>
    <property type="match status" value="1"/>
</dbReference>
<dbReference type="PANTHER" id="PTHR43445:SF3">
    <property type="entry name" value="UDP-N-ACETYLMURAMATE--L-ALANINE LIGASE"/>
    <property type="match status" value="1"/>
</dbReference>
<dbReference type="PANTHER" id="PTHR43445">
    <property type="entry name" value="UDP-N-ACETYLMURAMATE--L-ALANINE LIGASE-RELATED"/>
    <property type="match status" value="1"/>
</dbReference>
<dbReference type="Pfam" id="PF01225">
    <property type="entry name" value="Mur_ligase"/>
    <property type="match status" value="1"/>
</dbReference>
<dbReference type="Pfam" id="PF02875">
    <property type="entry name" value="Mur_ligase_C"/>
    <property type="match status" value="1"/>
</dbReference>
<dbReference type="Pfam" id="PF08245">
    <property type="entry name" value="Mur_ligase_M"/>
    <property type="match status" value="1"/>
</dbReference>
<dbReference type="SUPFAM" id="SSF51984">
    <property type="entry name" value="MurCD N-terminal domain"/>
    <property type="match status" value="1"/>
</dbReference>
<dbReference type="SUPFAM" id="SSF53623">
    <property type="entry name" value="MurD-like peptide ligases, catalytic domain"/>
    <property type="match status" value="1"/>
</dbReference>
<dbReference type="SUPFAM" id="SSF53244">
    <property type="entry name" value="MurD-like peptide ligases, peptide-binding domain"/>
    <property type="match status" value="1"/>
</dbReference>
<sequence>MTHYHFVGIKGSGMSSLAQIMHDLGHEVQGSDIENYVFTEVALRNKGIKILPFDANNIKEDMVVIQGNAFASSHEEIVRAHQLKLDVVSYNDFLGQIIDQYTSVAVTGAHGKTSTTGLLSHVMNGDKKTSFLIGDGTGMGLPESDYFAFEACEYRRHFLSYKPDYAIMTNIDFDHPDYFKDINDVFDAFQEMAHNVKKGIIAWGDDEHLRKIEADVPIYYYGFKDSDDIYAQNIQITDKGTAFDVYVDGEFYDHFLSPQYGDHTVLNALAVIAISYLEKLDVTNIKEALETFGGVKRRFNETTIANQVIVDDYAHHPREISATIETARKKYPHKEVVAVFQPHTFSRTQAFLNEFAESLSKADRVFLCEIFGSIRENTGALTIQDLIDKIEGASLINEDSINVLEQFDNAVILFMGAGDIQKLQNAYLDKLGMKNAF</sequence>
<accession>A6QHS3</accession>
<protein>
    <recommendedName>
        <fullName evidence="1">UDP-N-acetylmuramate--L-alanine ligase</fullName>
        <ecNumber evidence="1">6.3.2.8</ecNumber>
    </recommendedName>
    <alternativeName>
        <fullName evidence="1">UDP-N-acetylmuramoyl-L-alanine synthetase</fullName>
    </alternativeName>
</protein>
<proteinExistence type="inferred from homology"/>
<evidence type="ECO:0000255" key="1">
    <source>
        <dbReference type="HAMAP-Rule" id="MF_00046"/>
    </source>
</evidence>
<reference key="1">
    <citation type="journal article" date="2008" name="J. Bacteriol.">
        <title>Genome sequence of Staphylococcus aureus strain Newman and comparative analysis of staphylococcal genomes: polymorphism and evolution of two major pathogenicity islands.</title>
        <authorList>
            <person name="Baba T."/>
            <person name="Bae T."/>
            <person name="Schneewind O."/>
            <person name="Takeuchi F."/>
            <person name="Hiramatsu K."/>
        </authorList>
    </citation>
    <scope>NUCLEOTIDE SEQUENCE [LARGE SCALE GENOMIC DNA]</scope>
    <source>
        <strain>Newman</strain>
    </source>
</reference>
<organism>
    <name type="scientific">Staphylococcus aureus (strain Newman)</name>
    <dbReference type="NCBI Taxonomy" id="426430"/>
    <lineage>
        <taxon>Bacteria</taxon>
        <taxon>Bacillati</taxon>
        <taxon>Bacillota</taxon>
        <taxon>Bacilli</taxon>
        <taxon>Bacillales</taxon>
        <taxon>Staphylococcaceae</taxon>
        <taxon>Staphylococcus</taxon>
    </lineage>
</organism>
<comment type="function">
    <text evidence="1">Cell wall formation.</text>
</comment>
<comment type="catalytic activity">
    <reaction evidence="1">
        <text>UDP-N-acetyl-alpha-D-muramate + L-alanine + ATP = UDP-N-acetyl-alpha-D-muramoyl-L-alanine + ADP + phosphate + H(+)</text>
        <dbReference type="Rhea" id="RHEA:23372"/>
        <dbReference type="ChEBI" id="CHEBI:15378"/>
        <dbReference type="ChEBI" id="CHEBI:30616"/>
        <dbReference type="ChEBI" id="CHEBI:43474"/>
        <dbReference type="ChEBI" id="CHEBI:57972"/>
        <dbReference type="ChEBI" id="CHEBI:70757"/>
        <dbReference type="ChEBI" id="CHEBI:83898"/>
        <dbReference type="ChEBI" id="CHEBI:456216"/>
        <dbReference type="EC" id="6.3.2.8"/>
    </reaction>
</comment>
<comment type="pathway">
    <text evidence="1">Cell wall biogenesis; peptidoglycan biosynthesis.</text>
</comment>
<comment type="subcellular location">
    <subcellularLocation>
        <location evidence="1">Cytoplasm</location>
    </subcellularLocation>
</comment>
<comment type="similarity">
    <text evidence="1">Belongs to the MurCDEF family.</text>
</comment>
<gene>
    <name evidence="1" type="primary">murC</name>
    <name type="ordered locus">NWMN_1633</name>
</gene>
<feature type="chain" id="PRO_1000071098" description="UDP-N-acetylmuramate--L-alanine ligase">
    <location>
        <begin position="1"/>
        <end position="437"/>
    </location>
</feature>
<feature type="binding site" evidence="1">
    <location>
        <begin position="108"/>
        <end position="114"/>
    </location>
    <ligand>
        <name>ATP</name>
        <dbReference type="ChEBI" id="CHEBI:30616"/>
    </ligand>
</feature>